<dbReference type="EC" id="2.5.1.9"/>
<dbReference type="EMBL" id="AE000657">
    <property type="protein sequence ID" value="AAC07572.1"/>
    <property type="molecule type" value="Genomic_DNA"/>
</dbReference>
<dbReference type="PIR" id="B70447">
    <property type="entry name" value="B70447"/>
</dbReference>
<dbReference type="RefSeq" id="NP_214170.1">
    <property type="nucleotide sequence ID" value="NC_000918.1"/>
</dbReference>
<dbReference type="RefSeq" id="WP_010881107.1">
    <property type="nucleotide sequence ID" value="NC_000918.1"/>
</dbReference>
<dbReference type="SMR" id="O67604"/>
<dbReference type="FunCoup" id="O67604">
    <property type="interactions" value="455"/>
</dbReference>
<dbReference type="STRING" id="224324.aq_1707"/>
<dbReference type="EnsemblBacteria" id="AAC07572">
    <property type="protein sequence ID" value="AAC07572"/>
    <property type="gene ID" value="aq_1707"/>
</dbReference>
<dbReference type="KEGG" id="aae:aq_1707"/>
<dbReference type="PATRIC" id="fig|224324.8.peg.1311"/>
<dbReference type="eggNOG" id="COG0307">
    <property type="taxonomic scope" value="Bacteria"/>
</dbReference>
<dbReference type="HOGENOM" id="CLU_034388_2_0_0"/>
<dbReference type="InParanoid" id="O67604"/>
<dbReference type="OrthoDB" id="9788537at2"/>
<dbReference type="UniPathway" id="UPA00275">
    <property type="reaction ID" value="UER00405"/>
</dbReference>
<dbReference type="Proteomes" id="UP000000798">
    <property type="component" value="Chromosome"/>
</dbReference>
<dbReference type="GO" id="GO:0004746">
    <property type="term" value="F:riboflavin synthase activity"/>
    <property type="evidence" value="ECO:0000318"/>
    <property type="project" value="GO_Central"/>
</dbReference>
<dbReference type="GO" id="GO:0009231">
    <property type="term" value="P:riboflavin biosynthetic process"/>
    <property type="evidence" value="ECO:0000318"/>
    <property type="project" value="GO_Central"/>
</dbReference>
<dbReference type="CDD" id="cd00402">
    <property type="entry name" value="Riboflavin_synthase_like"/>
    <property type="match status" value="1"/>
</dbReference>
<dbReference type="FunFam" id="2.40.30.20:FF:000011">
    <property type="entry name" value="Riboflavin synthase alpha subunit"/>
    <property type="match status" value="1"/>
</dbReference>
<dbReference type="FunFam" id="2.40.30.20:FF:000003">
    <property type="entry name" value="Riboflavin synthase, alpha subunit"/>
    <property type="match status" value="1"/>
</dbReference>
<dbReference type="Gene3D" id="2.40.30.20">
    <property type="match status" value="2"/>
</dbReference>
<dbReference type="InterPro" id="IPR023366">
    <property type="entry name" value="ATP_synth_asu-like_sf"/>
</dbReference>
<dbReference type="InterPro" id="IPR001783">
    <property type="entry name" value="Lumazine-bd"/>
</dbReference>
<dbReference type="InterPro" id="IPR026017">
    <property type="entry name" value="Lumazine-bd_dom"/>
</dbReference>
<dbReference type="InterPro" id="IPR017938">
    <property type="entry name" value="Riboflavin_synthase-like_b-brl"/>
</dbReference>
<dbReference type="NCBIfam" id="NF006767">
    <property type="entry name" value="PRK09289.1"/>
    <property type="match status" value="1"/>
</dbReference>
<dbReference type="NCBIfam" id="NF009566">
    <property type="entry name" value="PRK13020.1"/>
    <property type="match status" value="1"/>
</dbReference>
<dbReference type="NCBIfam" id="TIGR00187">
    <property type="entry name" value="ribE"/>
    <property type="match status" value="1"/>
</dbReference>
<dbReference type="PANTHER" id="PTHR21098:SF12">
    <property type="entry name" value="RIBOFLAVIN SYNTHASE"/>
    <property type="match status" value="1"/>
</dbReference>
<dbReference type="PANTHER" id="PTHR21098">
    <property type="entry name" value="RIBOFLAVIN SYNTHASE ALPHA CHAIN"/>
    <property type="match status" value="1"/>
</dbReference>
<dbReference type="Pfam" id="PF00677">
    <property type="entry name" value="Lum_binding"/>
    <property type="match status" value="2"/>
</dbReference>
<dbReference type="PIRSF" id="PIRSF000498">
    <property type="entry name" value="Riboflavin_syn_A"/>
    <property type="match status" value="1"/>
</dbReference>
<dbReference type="SUPFAM" id="SSF63380">
    <property type="entry name" value="Riboflavin synthase domain-like"/>
    <property type="match status" value="2"/>
</dbReference>
<dbReference type="PROSITE" id="PS51177">
    <property type="entry name" value="LUMAZINE_BIND"/>
    <property type="match status" value="2"/>
</dbReference>
<evidence type="ECO:0000250" key="1"/>
<evidence type="ECO:0000250" key="2">
    <source>
        <dbReference type="UniProtKB" id="P0AFU8"/>
    </source>
</evidence>
<evidence type="ECO:0000250" key="3">
    <source>
        <dbReference type="UniProtKB" id="Q2YN92"/>
    </source>
</evidence>
<reference key="1">
    <citation type="journal article" date="1998" name="Nature">
        <title>The complete genome of the hyperthermophilic bacterium Aquifex aeolicus.</title>
        <authorList>
            <person name="Deckert G."/>
            <person name="Warren P.V."/>
            <person name="Gaasterland T."/>
            <person name="Young W.G."/>
            <person name="Lenox A.L."/>
            <person name="Graham D.E."/>
            <person name="Overbeek R."/>
            <person name="Snead M.A."/>
            <person name="Keller M."/>
            <person name="Aujay M."/>
            <person name="Huber R."/>
            <person name="Feldman R.A."/>
            <person name="Short J.M."/>
            <person name="Olsen G.J."/>
            <person name="Swanson R.V."/>
        </authorList>
    </citation>
    <scope>NUCLEOTIDE SEQUENCE [LARGE SCALE GENOMIC DNA]</scope>
    <source>
        <strain>VF5</strain>
    </source>
</reference>
<organism>
    <name type="scientific">Aquifex aeolicus (strain VF5)</name>
    <dbReference type="NCBI Taxonomy" id="224324"/>
    <lineage>
        <taxon>Bacteria</taxon>
        <taxon>Pseudomonadati</taxon>
        <taxon>Aquificota</taxon>
        <taxon>Aquificia</taxon>
        <taxon>Aquificales</taxon>
        <taxon>Aquificaceae</taxon>
        <taxon>Aquifex</taxon>
    </lineage>
</organism>
<keyword id="KW-1185">Reference proteome</keyword>
<keyword id="KW-0677">Repeat</keyword>
<keyword id="KW-0686">Riboflavin biosynthesis</keyword>
<keyword id="KW-0808">Transferase</keyword>
<sequence length="207" mass="23196">MFTGLVEDLGKVKNLTLSSKGAKLSVETKLEDVKLGDSVSVNGACLTVVDIKSSTLTFDVSPETLKRTNLGKLKTGDYVNLERALRVGERLGGHIVQGHVDFTAPVKSFNFLGEHYELVIEIPEEWSIYVVEKGSIALDGISLTVNYVKENKVFINIIPHTYKSTNLQFKKVGDLLNVETDILGKYVINYLNKLKKKEDIFKEFLKW</sequence>
<proteinExistence type="inferred from homology"/>
<feature type="chain" id="PRO_0000068157" description="Riboflavin synthase">
    <location>
        <begin position="1"/>
        <end position="207"/>
    </location>
</feature>
<feature type="repeat" description="Lumazine-binding 1">
    <location>
        <begin position="1"/>
        <end position="94"/>
    </location>
</feature>
<feature type="repeat" description="Lumazine-binding 2">
    <location>
        <begin position="95"/>
        <end position="191"/>
    </location>
</feature>
<feature type="binding site" evidence="3">
    <location>
        <begin position="4"/>
        <end position="6"/>
    </location>
    <ligand>
        <name>2,4-dihydroxypteridine</name>
        <dbReference type="ChEBI" id="CHEBI:16489"/>
        <label>1</label>
    </ligand>
</feature>
<feature type="binding site" evidence="3">
    <location>
        <begin position="45"/>
        <end position="47"/>
    </location>
    <ligand>
        <name>2,4-dihydroxypteridine</name>
        <dbReference type="ChEBI" id="CHEBI:16489"/>
        <label>2</label>
        <note>ligand shared between two trimeric partners</note>
    </ligand>
</feature>
<feature type="binding site" evidence="2">
    <location>
        <begin position="59"/>
        <end position="64"/>
    </location>
    <ligand>
        <name>2,4-dihydroxypteridine</name>
        <dbReference type="ChEBI" id="CHEBI:16489"/>
        <label>2</label>
        <note>ligand shared between two trimeric partners</note>
    </ligand>
</feature>
<feature type="binding site" evidence="3">
    <location>
        <begin position="98"/>
        <end position="100"/>
    </location>
    <ligand>
        <name>2,4-dihydroxypteridine</name>
        <dbReference type="ChEBI" id="CHEBI:16489"/>
        <label>2</label>
        <note>ligand shared between two trimeric partners</note>
    </ligand>
</feature>
<feature type="binding site" description="in other chain" evidence="3">
    <location>
        <position position="133"/>
    </location>
    <ligand>
        <name>2,4-dihydroxypteridine</name>
        <dbReference type="ChEBI" id="CHEBI:16489"/>
        <label>2</label>
        <note>ligand shared between two trimeric partners</note>
    </ligand>
</feature>
<feature type="binding site" evidence="3">
    <location>
        <begin position="142"/>
        <end position="144"/>
    </location>
    <ligand>
        <name>2,4-dihydroxypteridine</name>
        <dbReference type="ChEBI" id="CHEBI:16489"/>
        <label>1</label>
    </ligand>
</feature>
<feature type="binding site" evidence="3">
    <location>
        <begin position="156"/>
        <end position="161"/>
    </location>
    <ligand>
        <name>2,4-dihydroxypteridine</name>
        <dbReference type="ChEBI" id="CHEBI:16489"/>
        <label>1</label>
    </ligand>
</feature>
<comment type="function">
    <text evidence="1">Catalyzes the dismutation of two molecules of 6,7-dimethyl-8-ribityllumazine, resulting in the formation of riboflavin and 5-amino-6-(D-ribitylamino)uracil.</text>
</comment>
<comment type="catalytic activity">
    <reaction>
        <text>2 6,7-dimethyl-8-(1-D-ribityl)lumazine + H(+) = 5-amino-6-(D-ribitylamino)uracil + riboflavin</text>
        <dbReference type="Rhea" id="RHEA:20772"/>
        <dbReference type="ChEBI" id="CHEBI:15378"/>
        <dbReference type="ChEBI" id="CHEBI:15934"/>
        <dbReference type="ChEBI" id="CHEBI:57986"/>
        <dbReference type="ChEBI" id="CHEBI:58201"/>
        <dbReference type="EC" id="2.5.1.9"/>
    </reaction>
</comment>
<comment type="pathway">
    <text>Cofactor biosynthesis; riboflavin biosynthesis; riboflavin from 2-hydroxy-3-oxobutyl phosphate and 5-amino-6-(D-ribitylamino)uracil: step 2/2.</text>
</comment>
<comment type="subunit">
    <text evidence="1">Homotrimer.</text>
</comment>
<accession>O67604</accession>
<protein>
    <recommendedName>
        <fullName>Riboflavin synthase</fullName>
        <shortName>RS</shortName>
        <ecNumber>2.5.1.9</ecNumber>
    </recommendedName>
</protein>
<gene>
    <name type="primary">ribE</name>
    <name type="synonym">ribC</name>
    <name type="ordered locus">aq_1707</name>
</gene>
<name>RISA_AQUAE</name>